<dbReference type="EC" id="6.2.1.5" evidence="1"/>
<dbReference type="EMBL" id="BX950851">
    <property type="protein sequence ID" value="CAG74273.1"/>
    <property type="molecule type" value="Genomic_DNA"/>
</dbReference>
<dbReference type="RefSeq" id="WP_011092948.1">
    <property type="nucleotide sequence ID" value="NC_004547.2"/>
</dbReference>
<dbReference type="SMR" id="Q6D7G2"/>
<dbReference type="STRING" id="218491.ECA1363"/>
<dbReference type="GeneID" id="57208177"/>
<dbReference type="KEGG" id="eca:ECA1363"/>
<dbReference type="eggNOG" id="COG0045">
    <property type="taxonomic scope" value="Bacteria"/>
</dbReference>
<dbReference type="HOGENOM" id="CLU_037430_0_2_6"/>
<dbReference type="OrthoDB" id="9802602at2"/>
<dbReference type="UniPathway" id="UPA00223">
    <property type="reaction ID" value="UER00999"/>
</dbReference>
<dbReference type="Proteomes" id="UP000007966">
    <property type="component" value="Chromosome"/>
</dbReference>
<dbReference type="GO" id="GO:0005829">
    <property type="term" value="C:cytosol"/>
    <property type="evidence" value="ECO:0007669"/>
    <property type="project" value="TreeGrafter"/>
</dbReference>
<dbReference type="GO" id="GO:0042709">
    <property type="term" value="C:succinate-CoA ligase complex"/>
    <property type="evidence" value="ECO:0007669"/>
    <property type="project" value="TreeGrafter"/>
</dbReference>
<dbReference type="GO" id="GO:0005524">
    <property type="term" value="F:ATP binding"/>
    <property type="evidence" value="ECO:0007669"/>
    <property type="project" value="UniProtKB-UniRule"/>
</dbReference>
<dbReference type="GO" id="GO:0000287">
    <property type="term" value="F:magnesium ion binding"/>
    <property type="evidence" value="ECO:0007669"/>
    <property type="project" value="UniProtKB-UniRule"/>
</dbReference>
<dbReference type="GO" id="GO:0004775">
    <property type="term" value="F:succinate-CoA ligase (ADP-forming) activity"/>
    <property type="evidence" value="ECO:0007669"/>
    <property type="project" value="UniProtKB-UniRule"/>
</dbReference>
<dbReference type="GO" id="GO:0004776">
    <property type="term" value="F:succinate-CoA ligase (GDP-forming) activity"/>
    <property type="evidence" value="ECO:0007669"/>
    <property type="project" value="RHEA"/>
</dbReference>
<dbReference type="GO" id="GO:0006104">
    <property type="term" value="P:succinyl-CoA metabolic process"/>
    <property type="evidence" value="ECO:0007669"/>
    <property type="project" value="TreeGrafter"/>
</dbReference>
<dbReference type="GO" id="GO:0006099">
    <property type="term" value="P:tricarboxylic acid cycle"/>
    <property type="evidence" value="ECO:0007669"/>
    <property type="project" value="UniProtKB-UniRule"/>
</dbReference>
<dbReference type="FunFam" id="3.30.1490.20:FF:000002">
    <property type="entry name" value="Succinate--CoA ligase [ADP-forming] subunit beta"/>
    <property type="match status" value="1"/>
</dbReference>
<dbReference type="FunFam" id="3.30.470.20:FF:000002">
    <property type="entry name" value="Succinate--CoA ligase [ADP-forming] subunit beta"/>
    <property type="match status" value="1"/>
</dbReference>
<dbReference type="FunFam" id="3.40.50.261:FF:000001">
    <property type="entry name" value="Succinate--CoA ligase [ADP-forming] subunit beta"/>
    <property type="match status" value="1"/>
</dbReference>
<dbReference type="Gene3D" id="3.30.1490.20">
    <property type="entry name" value="ATP-grasp fold, A domain"/>
    <property type="match status" value="1"/>
</dbReference>
<dbReference type="Gene3D" id="3.30.470.20">
    <property type="entry name" value="ATP-grasp fold, B domain"/>
    <property type="match status" value="1"/>
</dbReference>
<dbReference type="Gene3D" id="3.40.50.261">
    <property type="entry name" value="Succinyl-CoA synthetase domains"/>
    <property type="match status" value="1"/>
</dbReference>
<dbReference type="HAMAP" id="MF_00558">
    <property type="entry name" value="Succ_CoA_beta"/>
    <property type="match status" value="1"/>
</dbReference>
<dbReference type="InterPro" id="IPR011761">
    <property type="entry name" value="ATP-grasp"/>
</dbReference>
<dbReference type="InterPro" id="IPR013650">
    <property type="entry name" value="ATP-grasp_succ-CoA_synth-type"/>
</dbReference>
<dbReference type="InterPro" id="IPR013815">
    <property type="entry name" value="ATP_grasp_subdomain_1"/>
</dbReference>
<dbReference type="InterPro" id="IPR017866">
    <property type="entry name" value="Succ-CoA_synthase_bsu_CS"/>
</dbReference>
<dbReference type="InterPro" id="IPR005811">
    <property type="entry name" value="SUCC_ACL_C"/>
</dbReference>
<dbReference type="InterPro" id="IPR005809">
    <property type="entry name" value="Succ_CoA_ligase-like_bsu"/>
</dbReference>
<dbReference type="InterPro" id="IPR016102">
    <property type="entry name" value="Succinyl-CoA_synth-like"/>
</dbReference>
<dbReference type="NCBIfam" id="NF001913">
    <property type="entry name" value="PRK00696.1"/>
    <property type="match status" value="1"/>
</dbReference>
<dbReference type="NCBIfam" id="TIGR01016">
    <property type="entry name" value="sucCoAbeta"/>
    <property type="match status" value="1"/>
</dbReference>
<dbReference type="PANTHER" id="PTHR11815:SF10">
    <property type="entry name" value="SUCCINATE--COA LIGASE [GDP-FORMING] SUBUNIT BETA, MITOCHONDRIAL"/>
    <property type="match status" value="1"/>
</dbReference>
<dbReference type="PANTHER" id="PTHR11815">
    <property type="entry name" value="SUCCINYL-COA SYNTHETASE BETA CHAIN"/>
    <property type="match status" value="1"/>
</dbReference>
<dbReference type="Pfam" id="PF08442">
    <property type="entry name" value="ATP-grasp_2"/>
    <property type="match status" value="1"/>
</dbReference>
<dbReference type="Pfam" id="PF00549">
    <property type="entry name" value="Ligase_CoA"/>
    <property type="match status" value="1"/>
</dbReference>
<dbReference type="PIRSF" id="PIRSF001554">
    <property type="entry name" value="SucCS_beta"/>
    <property type="match status" value="1"/>
</dbReference>
<dbReference type="SUPFAM" id="SSF56059">
    <property type="entry name" value="Glutathione synthetase ATP-binding domain-like"/>
    <property type="match status" value="1"/>
</dbReference>
<dbReference type="SUPFAM" id="SSF52210">
    <property type="entry name" value="Succinyl-CoA synthetase domains"/>
    <property type="match status" value="1"/>
</dbReference>
<dbReference type="PROSITE" id="PS50975">
    <property type="entry name" value="ATP_GRASP"/>
    <property type="match status" value="1"/>
</dbReference>
<dbReference type="PROSITE" id="PS01217">
    <property type="entry name" value="SUCCINYL_COA_LIG_3"/>
    <property type="match status" value="1"/>
</dbReference>
<protein>
    <recommendedName>
        <fullName evidence="1">Succinate--CoA ligase [ADP-forming] subunit beta</fullName>
        <ecNumber evidence="1">6.2.1.5</ecNumber>
    </recommendedName>
    <alternativeName>
        <fullName evidence="1">Succinyl-CoA synthetase subunit beta</fullName>
        <shortName evidence="1">SCS-beta</shortName>
    </alternativeName>
</protein>
<evidence type="ECO:0000255" key="1">
    <source>
        <dbReference type="HAMAP-Rule" id="MF_00558"/>
    </source>
</evidence>
<proteinExistence type="inferred from homology"/>
<sequence length="388" mass="41158">MNLHEYQAKQLFARYGLPAPTGYACTTPREAEEAASKIGSGPWVVKCQVHAGGRGKAGGVKVVSNKEDIRAFAENWLGKKLVTYQTDAQGQPVHQILVEAATDIDKELYLGAVVDRGTRRVVFMASTEGGVEIEKVAEETPELIHKAAIDPLVGPQPYQGRELAFKLGLSGKQVAQFTKIFMGLATLFLERDLALVEINPLVITKQGDLICLDGKLGADGNALFRQPELREMRDPSQEDSREAHAAQWELNYVALDGNIGCMVNGAGLAMGTMDIVKLHGGSPANFLDVGGGATKERVTEAFKIILSDDKVKAVFVNIFGGIVRCDLIADGIIGAVAEVGVSVPVVVRLEGNNAELGAKKLADSGLNIIAATSLTGAAQQVVAAAGDK</sequence>
<feature type="chain" id="PRO_1000082082" description="Succinate--CoA ligase [ADP-forming] subunit beta">
    <location>
        <begin position="1"/>
        <end position="388"/>
    </location>
</feature>
<feature type="domain" description="ATP-grasp" evidence="1">
    <location>
        <begin position="9"/>
        <end position="244"/>
    </location>
</feature>
<feature type="binding site" evidence="1">
    <location>
        <position position="46"/>
    </location>
    <ligand>
        <name>ATP</name>
        <dbReference type="ChEBI" id="CHEBI:30616"/>
    </ligand>
</feature>
<feature type="binding site" evidence="1">
    <location>
        <begin position="53"/>
        <end position="55"/>
    </location>
    <ligand>
        <name>ATP</name>
        <dbReference type="ChEBI" id="CHEBI:30616"/>
    </ligand>
</feature>
<feature type="binding site" evidence="1">
    <location>
        <position position="99"/>
    </location>
    <ligand>
        <name>ATP</name>
        <dbReference type="ChEBI" id="CHEBI:30616"/>
    </ligand>
</feature>
<feature type="binding site" evidence="1">
    <location>
        <position position="102"/>
    </location>
    <ligand>
        <name>ATP</name>
        <dbReference type="ChEBI" id="CHEBI:30616"/>
    </ligand>
</feature>
<feature type="binding site" evidence="1">
    <location>
        <position position="107"/>
    </location>
    <ligand>
        <name>ATP</name>
        <dbReference type="ChEBI" id="CHEBI:30616"/>
    </ligand>
</feature>
<feature type="binding site" evidence="1">
    <location>
        <position position="199"/>
    </location>
    <ligand>
        <name>Mg(2+)</name>
        <dbReference type="ChEBI" id="CHEBI:18420"/>
    </ligand>
</feature>
<feature type="binding site" evidence="1">
    <location>
        <position position="213"/>
    </location>
    <ligand>
        <name>Mg(2+)</name>
        <dbReference type="ChEBI" id="CHEBI:18420"/>
    </ligand>
</feature>
<feature type="binding site" evidence="1">
    <location>
        <position position="264"/>
    </location>
    <ligand>
        <name>substrate</name>
        <note>ligand shared with subunit alpha</note>
    </ligand>
</feature>
<feature type="binding site" evidence="1">
    <location>
        <begin position="321"/>
        <end position="323"/>
    </location>
    <ligand>
        <name>substrate</name>
        <note>ligand shared with subunit alpha</note>
    </ligand>
</feature>
<gene>
    <name evidence="1" type="primary">sucC</name>
    <name type="ordered locus">ECA1363</name>
</gene>
<keyword id="KW-0067">ATP-binding</keyword>
<keyword id="KW-0436">Ligase</keyword>
<keyword id="KW-0460">Magnesium</keyword>
<keyword id="KW-0479">Metal-binding</keyword>
<keyword id="KW-0547">Nucleotide-binding</keyword>
<keyword id="KW-1185">Reference proteome</keyword>
<keyword id="KW-0816">Tricarboxylic acid cycle</keyword>
<reference key="1">
    <citation type="journal article" date="2004" name="Proc. Natl. Acad. Sci. U.S.A.">
        <title>Genome sequence of the enterobacterial phytopathogen Erwinia carotovora subsp. atroseptica and characterization of virulence factors.</title>
        <authorList>
            <person name="Bell K.S."/>
            <person name="Sebaihia M."/>
            <person name="Pritchard L."/>
            <person name="Holden M.T.G."/>
            <person name="Hyman L.J."/>
            <person name="Holeva M.C."/>
            <person name="Thomson N.R."/>
            <person name="Bentley S.D."/>
            <person name="Churcher L.J.C."/>
            <person name="Mungall K."/>
            <person name="Atkin R."/>
            <person name="Bason N."/>
            <person name="Brooks K."/>
            <person name="Chillingworth T."/>
            <person name="Clark K."/>
            <person name="Doggett J."/>
            <person name="Fraser A."/>
            <person name="Hance Z."/>
            <person name="Hauser H."/>
            <person name="Jagels K."/>
            <person name="Moule S."/>
            <person name="Norbertczak H."/>
            <person name="Ormond D."/>
            <person name="Price C."/>
            <person name="Quail M.A."/>
            <person name="Sanders M."/>
            <person name="Walker D."/>
            <person name="Whitehead S."/>
            <person name="Salmond G.P.C."/>
            <person name="Birch P.R.J."/>
            <person name="Parkhill J."/>
            <person name="Toth I.K."/>
        </authorList>
    </citation>
    <scope>NUCLEOTIDE SEQUENCE [LARGE SCALE GENOMIC DNA]</scope>
    <source>
        <strain>SCRI 1043 / ATCC BAA-672</strain>
    </source>
</reference>
<accession>Q6D7G2</accession>
<organism>
    <name type="scientific">Pectobacterium atrosepticum (strain SCRI 1043 / ATCC BAA-672)</name>
    <name type="common">Erwinia carotovora subsp. atroseptica</name>
    <dbReference type="NCBI Taxonomy" id="218491"/>
    <lineage>
        <taxon>Bacteria</taxon>
        <taxon>Pseudomonadati</taxon>
        <taxon>Pseudomonadota</taxon>
        <taxon>Gammaproteobacteria</taxon>
        <taxon>Enterobacterales</taxon>
        <taxon>Pectobacteriaceae</taxon>
        <taxon>Pectobacterium</taxon>
    </lineage>
</organism>
<name>SUCC_PECAS</name>
<comment type="function">
    <text evidence="1">Succinyl-CoA synthetase functions in the citric acid cycle (TCA), coupling the hydrolysis of succinyl-CoA to the synthesis of either ATP or GTP and thus represents the only step of substrate-level phosphorylation in the TCA. The beta subunit provides nucleotide specificity of the enzyme and binds the substrate succinate, while the binding sites for coenzyme A and phosphate are found in the alpha subunit.</text>
</comment>
<comment type="catalytic activity">
    <reaction evidence="1">
        <text>succinate + ATP + CoA = succinyl-CoA + ADP + phosphate</text>
        <dbReference type="Rhea" id="RHEA:17661"/>
        <dbReference type="ChEBI" id="CHEBI:30031"/>
        <dbReference type="ChEBI" id="CHEBI:30616"/>
        <dbReference type="ChEBI" id="CHEBI:43474"/>
        <dbReference type="ChEBI" id="CHEBI:57287"/>
        <dbReference type="ChEBI" id="CHEBI:57292"/>
        <dbReference type="ChEBI" id="CHEBI:456216"/>
        <dbReference type="EC" id="6.2.1.5"/>
    </reaction>
    <physiologicalReaction direction="right-to-left" evidence="1">
        <dbReference type="Rhea" id="RHEA:17663"/>
    </physiologicalReaction>
</comment>
<comment type="catalytic activity">
    <reaction evidence="1">
        <text>GTP + succinate + CoA = succinyl-CoA + GDP + phosphate</text>
        <dbReference type="Rhea" id="RHEA:22120"/>
        <dbReference type="ChEBI" id="CHEBI:30031"/>
        <dbReference type="ChEBI" id="CHEBI:37565"/>
        <dbReference type="ChEBI" id="CHEBI:43474"/>
        <dbReference type="ChEBI" id="CHEBI:57287"/>
        <dbReference type="ChEBI" id="CHEBI:57292"/>
        <dbReference type="ChEBI" id="CHEBI:58189"/>
    </reaction>
    <physiologicalReaction direction="right-to-left" evidence="1">
        <dbReference type="Rhea" id="RHEA:22122"/>
    </physiologicalReaction>
</comment>
<comment type="cofactor">
    <cofactor evidence="1">
        <name>Mg(2+)</name>
        <dbReference type="ChEBI" id="CHEBI:18420"/>
    </cofactor>
    <text evidence="1">Binds 1 Mg(2+) ion per subunit.</text>
</comment>
<comment type="pathway">
    <text evidence="1">Carbohydrate metabolism; tricarboxylic acid cycle; succinate from succinyl-CoA (ligase route): step 1/1.</text>
</comment>
<comment type="subunit">
    <text evidence="1">Heterotetramer of two alpha and two beta subunits.</text>
</comment>
<comment type="similarity">
    <text evidence="1">Belongs to the succinate/malate CoA ligase beta subunit family.</text>
</comment>